<feature type="chain" id="PRO_1000190818" description="Elongation factor 4">
    <location>
        <begin position="1"/>
        <end position="601"/>
    </location>
</feature>
<feature type="domain" description="tr-type G">
    <location>
        <begin position="7"/>
        <end position="189"/>
    </location>
</feature>
<feature type="binding site" evidence="1">
    <location>
        <begin position="19"/>
        <end position="24"/>
    </location>
    <ligand>
        <name>GTP</name>
        <dbReference type="ChEBI" id="CHEBI:37565"/>
    </ligand>
</feature>
<feature type="binding site" evidence="1">
    <location>
        <begin position="136"/>
        <end position="139"/>
    </location>
    <ligand>
        <name>GTP</name>
        <dbReference type="ChEBI" id="CHEBI:37565"/>
    </ligand>
</feature>
<sequence length="601" mass="66660">MTAKPIDTIRNFSIVAHIDHGKSTLADRLIQLTGALSAREMTEQVLDSMDIERERGITIKAQTVRLDYTAQDGRTYILNLMDTPGHVDFTYEVSRSLAACEGSLLVVDASQGVEAQTLANVYQAIDANHEIVPVLNKIDLPAAEPDRVKQQIEEVIGIDASEAVPISAKTGLNIEAVLEAIVAKLPPPKGDRAAPLKALLVDSWYDVYLGVVVLVRIVDGVLKKGMTIRMMGADAVYGVDRIGVFRPKMQDVAELGPGEVGFLTASIKEVADTRVGDTITEDRRPTDSPLPGFKPVQPVVFCGLFPVDAAEFENLRAAMGKLRLNDASFSYEMETSAALGFGFRCGFLGLLHLEIIQERLEREFNLDLISTAPSVVYRLNMSDGTMRELHNPADMPDVMKIDTIEEPWIRATILTPDDYLGSVLKLCQDRRGTQIDLNYVGKRAMVVYDLPLNEVVFDFYDRLKSISKGYASFDYHISDYREGDLVKMSILVNSEPVDALSMLVHRTRAESRGRAMCEKLKDLIPRHLFQIPVQAAIGGKIIARETIRALSKDVTAKCYGGDISRKRKLLDKQKEGKKRMRQFGKVEIPQEAFIAALKMDS</sequence>
<comment type="function">
    <text evidence="1">Required for accurate and efficient protein synthesis under certain stress conditions. May act as a fidelity factor of the translation reaction, by catalyzing a one-codon backward translocation of tRNAs on improperly translocated ribosomes. Back-translocation proceeds from a post-translocation (POST) complex to a pre-translocation (PRE) complex, thus giving elongation factor G a second chance to translocate the tRNAs correctly. Binds to ribosomes in a GTP-dependent manner.</text>
</comment>
<comment type="catalytic activity">
    <reaction evidence="1">
        <text>GTP + H2O = GDP + phosphate + H(+)</text>
        <dbReference type="Rhea" id="RHEA:19669"/>
        <dbReference type="ChEBI" id="CHEBI:15377"/>
        <dbReference type="ChEBI" id="CHEBI:15378"/>
        <dbReference type="ChEBI" id="CHEBI:37565"/>
        <dbReference type="ChEBI" id="CHEBI:43474"/>
        <dbReference type="ChEBI" id="CHEBI:58189"/>
        <dbReference type="EC" id="3.6.5.n1"/>
    </reaction>
</comment>
<comment type="subcellular location">
    <subcellularLocation>
        <location evidence="1">Cell inner membrane</location>
        <topology evidence="1">Peripheral membrane protein</topology>
        <orientation evidence="1">Cytoplasmic side</orientation>
    </subcellularLocation>
</comment>
<comment type="similarity">
    <text evidence="1">Belongs to the TRAFAC class translation factor GTPase superfamily. Classic translation factor GTPase family. LepA subfamily.</text>
</comment>
<dbReference type="EC" id="3.6.5.n1" evidence="1"/>
<dbReference type="EMBL" id="CP001349">
    <property type="protein sequence ID" value="ACL60273.1"/>
    <property type="molecule type" value="Genomic_DNA"/>
</dbReference>
<dbReference type="RefSeq" id="WP_015931881.1">
    <property type="nucleotide sequence ID" value="NC_011894.1"/>
</dbReference>
<dbReference type="SMR" id="B8IMT0"/>
<dbReference type="STRING" id="460265.Mnod_5429"/>
<dbReference type="KEGG" id="mno:Mnod_5429"/>
<dbReference type="eggNOG" id="COG0481">
    <property type="taxonomic scope" value="Bacteria"/>
</dbReference>
<dbReference type="HOGENOM" id="CLU_009995_3_3_5"/>
<dbReference type="OrthoDB" id="9802948at2"/>
<dbReference type="Proteomes" id="UP000008207">
    <property type="component" value="Chromosome"/>
</dbReference>
<dbReference type="GO" id="GO:0005886">
    <property type="term" value="C:plasma membrane"/>
    <property type="evidence" value="ECO:0007669"/>
    <property type="project" value="UniProtKB-SubCell"/>
</dbReference>
<dbReference type="GO" id="GO:0005525">
    <property type="term" value="F:GTP binding"/>
    <property type="evidence" value="ECO:0007669"/>
    <property type="project" value="UniProtKB-UniRule"/>
</dbReference>
<dbReference type="GO" id="GO:0003924">
    <property type="term" value="F:GTPase activity"/>
    <property type="evidence" value="ECO:0007669"/>
    <property type="project" value="UniProtKB-UniRule"/>
</dbReference>
<dbReference type="GO" id="GO:0097216">
    <property type="term" value="F:guanosine tetraphosphate binding"/>
    <property type="evidence" value="ECO:0007669"/>
    <property type="project" value="UniProtKB-ARBA"/>
</dbReference>
<dbReference type="GO" id="GO:0043022">
    <property type="term" value="F:ribosome binding"/>
    <property type="evidence" value="ECO:0007669"/>
    <property type="project" value="UniProtKB-UniRule"/>
</dbReference>
<dbReference type="GO" id="GO:0003746">
    <property type="term" value="F:translation elongation factor activity"/>
    <property type="evidence" value="ECO:0007669"/>
    <property type="project" value="UniProtKB-UniRule"/>
</dbReference>
<dbReference type="GO" id="GO:0045727">
    <property type="term" value="P:positive regulation of translation"/>
    <property type="evidence" value="ECO:0007669"/>
    <property type="project" value="UniProtKB-UniRule"/>
</dbReference>
<dbReference type="CDD" id="cd03699">
    <property type="entry name" value="EF4_II"/>
    <property type="match status" value="1"/>
</dbReference>
<dbReference type="CDD" id="cd16260">
    <property type="entry name" value="EF4_III"/>
    <property type="match status" value="1"/>
</dbReference>
<dbReference type="CDD" id="cd01890">
    <property type="entry name" value="LepA"/>
    <property type="match status" value="1"/>
</dbReference>
<dbReference type="CDD" id="cd03709">
    <property type="entry name" value="lepA_C"/>
    <property type="match status" value="1"/>
</dbReference>
<dbReference type="FunFam" id="3.40.50.300:FF:000078">
    <property type="entry name" value="Elongation factor 4"/>
    <property type="match status" value="1"/>
</dbReference>
<dbReference type="FunFam" id="2.40.30.10:FF:000015">
    <property type="entry name" value="Translation factor GUF1, mitochondrial"/>
    <property type="match status" value="1"/>
</dbReference>
<dbReference type="FunFam" id="3.30.70.240:FF:000007">
    <property type="entry name" value="Translation factor GUF1, mitochondrial"/>
    <property type="match status" value="1"/>
</dbReference>
<dbReference type="FunFam" id="3.30.70.2570:FF:000001">
    <property type="entry name" value="Translation factor GUF1, mitochondrial"/>
    <property type="match status" value="1"/>
</dbReference>
<dbReference type="FunFam" id="3.30.70.870:FF:000004">
    <property type="entry name" value="Translation factor GUF1, mitochondrial"/>
    <property type="match status" value="1"/>
</dbReference>
<dbReference type="Gene3D" id="3.30.70.240">
    <property type="match status" value="1"/>
</dbReference>
<dbReference type="Gene3D" id="3.30.70.2570">
    <property type="entry name" value="Elongation factor 4, C-terminal domain"/>
    <property type="match status" value="1"/>
</dbReference>
<dbReference type="Gene3D" id="3.30.70.870">
    <property type="entry name" value="Elongation Factor G (Translational Gtpase), domain 3"/>
    <property type="match status" value="1"/>
</dbReference>
<dbReference type="Gene3D" id="3.40.50.300">
    <property type="entry name" value="P-loop containing nucleotide triphosphate hydrolases"/>
    <property type="match status" value="1"/>
</dbReference>
<dbReference type="Gene3D" id="2.40.30.10">
    <property type="entry name" value="Translation factors"/>
    <property type="match status" value="1"/>
</dbReference>
<dbReference type="HAMAP" id="MF_00071">
    <property type="entry name" value="LepA"/>
    <property type="match status" value="1"/>
</dbReference>
<dbReference type="InterPro" id="IPR006297">
    <property type="entry name" value="EF-4"/>
</dbReference>
<dbReference type="InterPro" id="IPR035647">
    <property type="entry name" value="EFG_III/V"/>
</dbReference>
<dbReference type="InterPro" id="IPR000640">
    <property type="entry name" value="EFG_V-like"/>
</dbReference>
<dbReference type="InterPro" id="IPR004161">
    <property type="entry name" value="EFTu-like_2"/>
</dbReference>
<dbReference type="InterPro" id="IPR031157">
    <property type="entry name" value="G_TR_CS"/>
</dbReference>
<dbReference type="InterPro" id="IPR038363">
    <property type="entry name" value="LepA_C_sf"/>
</dbReference>
<dbReference type="InterPro" id="IPR013842">
    <property type="entry name" value="LepA_CTD"/>
</dbReference>
<dbReference type="InterPro" id="IPR035654">
    <property type="entry name" value="LepA_IV"/>
</dbReference>
<dbReference type="InterPro" id="IPR027417">
    <property type="entry name" value="P-loop_NTPase"/>
</dbReference>
<dbReference type="InterPro" id="IPR005225">
    <property type="entry name" value="Small_GTP-bd"/>
</dbReference>
<dbReference type="InterPro" id="IPR000795">
    <property type="entry name" value="T_Tr_GTP-bd_dom"/>
</dbReference>
<dbReference type="NCBIfam" id="TIGR01393">
    <property type="entry name" value="lepA"/>
    <property type="match status" value="1"/>
</dbReference>
<dbReference type="NCBIfam" id="TIGR00231">
    <property type="entry name" value="small_GTP"/>
    <property type="match status" value="1"/>
</dbReference>
<dbReference type="PANTHER" id="PTHR43512:SF4">
    <property type="entry name" value="TRANSLATION FACTOR GUF1 HOMOLOG, CHLOROPLASTIC"/>
    <property type="match status" value="1"/>
</dbReference>
<dbReference type="PANTHER" id="PTHR43512">
    <property type="entry name" value="TRANSLATION FACTOR GUF1-RELATED"/>
    <property type="match status" value="1"/>
</dbReference>
<dbReference type="Pfam" id="PF00679">
    <property type="entry name" value="EFG_C"/>
    <property type="match status" value="1"/>
</dbReference>
<dbReference type="Pfam" id="PF00009">
    <property type="entry name" value="GTP_EFTU"/>
    <property type="match status" value="1"/>
</dbReference>
<dbReference type="Pfam" id="PF03144">
    <property type="entry name" value="GTP_EFTU_D2"/>
    <property type="match status" value="1"/>
</dbReference>
<dbReference type="Pfam" id="PF06421">
    <property type="entry name" value="LepA_C"/>
    <property type="match status" value="1"/>
</dbReference>
<dbReference type="PRINTS" id="PR00315">
    <property type="entry name" value="ELONGATNFCT"/>
</dbReference>
<dbReference type="SMART" id="SM00838">
    <property type="entry name" value="EFG_C"/>
    <property type="match status" value="1"/>
</dbReference>
<dbReference type="SUPFAM" id="SSF54980">
    <property type="entry name" value="EF-G C-terminal domain-like"/>
    <property type="match status" value="2"/>
</dbReference>
<dbReference type="SUPFAM" id="SSF52540">
    <property type="entry name" value="P-loop containing nucleoside triphosphate hydrolases"/>
    <property type="match status" value="1"/>
</dbReference>
<dbReference type="PROSITE" id="PS00301">
    <property type="entry name" value="G_TR_1"/>
    <property type="match status" value="1"/>
</dbReference>
<dbReference type="PROSITE" id="PS51722">
    <property type="entry name" value="G_TR_2"/>
    <property type="match status" value="1"/>
</dbReference>
<organism>
    <name type="scientific">Methylobacterium nodulans (strain LMG 21967 / CNCM I-2342 / ORS 2060)</name>
    <dbReference type="NCBI Taxonomy" id="460265"/>
    <lineage>
        <taxon>Bacteria</taxon>
        <taxon>Pseudomonadati</taxon>
        <taxon>Pseudomonadota</taxon>
        <taxon>Alphaproteobacteria</taxon>
        <taxon>Hyphomicrobiales</taxon>
        <taxon>Methylobacteriaceae</taxon>
        <taxon>Methylobacterium</taxon>
    </lineage>
</organism>
<gene>
    <name evidence="1" type="primary">lepA</name>
    <name type="ordered locus">Mnod_5429</name>
</gene>
<name>LEPA_METNO</name>
<accession>B8IMT0</accession>
<keyword id="KW-0997">Cell inner membrane</keyword>
<keyword id="KW-1003">Cell membrane</keyword>
<keyword id="KW-0342">GTP-binding</keyword>
<keyword id="KW-0378">Hydrolase</keyword>
<keyword id="KW-0472">Membrane</keyword>
<keyword id="KW-0547">Nucleotide-binding</keyword>
<keyword id="KW-0648">Protein biosynthesis</keyword>
<keyword id="KW-1185">Reference proteome</keyword>
<evidence type="ECO:0000255" key="1">
    <source>
        <dbReference type="HAMAP-Rule" id="MF_00071"/>
    </source>
</evidence>
<reference key="1">
    <citation type="submission" date="2009-01" db="EMBL/GenBank/DDBJ databases">
        <title>Complete sequence of chromosome of Methylobacterium nodulans ORS 2060.</title>
        <authorList>
            <consortium name="US DOE Joint Genome Institute"/>
            <person name="Lucas S."/>
            <person name="Copeland A."/>
            <person name="Lapidus A."/>
            <person name="Glavina del Rio T."/>
            <person name="Dalin E."/>
            <person name="Tice H."/>
            <person name="Bruce D."/>
            <person name="Goodwin L."/>
            <person name="Pitluck S."/>
            <person name="Sims D."/>
            <person name="Brettin T."/>
            <person name="Detter J.C."/>
            <person name="Han C."/>
            <person name="Larimer F."/>
            <person name="Land M."/>
            <person name="Hauser L."/>
            <person name="Kyrpides N."/>
            <person name="Ivanova N."/>
            <person name="Marx C.J."/>
            <person name="Richardson P."/>
        </authorList>
    </citation>
    <scope>NUCLEOTIDE SEQUENCE [LARGE SCALE GENOMIC DNA]</scope>
    <source>
        <strain>LMG 21967 / CNCM I-2342 / ORS 2060</strain>
    </source>
</reference>
<protein>
    <recommendedName>
        <fullName evidence="1">Elongation factor 4</fullName>
        <shortName evidence="1">EF-4</shortName>
        <ecNumber evidence="1">3.6.5.n1</ecNumber>
    </recommendedName>
    <alternativeName>
        <fullName evidence="1">Ribosomal back-translocase LepA</fullName>
    </alternativeName>
</protein>
<proteinExistence type="inferred from homology"/>